<reference key="1">
    <citation type="journal article" date="2008" name="J. Biotechnol.">
        <title>The genome of Xanthomonas campestris pv. campestris B100 and its use for the reconstruction of metabolic pathways involved in xanthan biosynthesis.</title>
        <authorList>
            <person name="Vorhoelter F.-J."/>
            <person name="Schneiker S."/>
            <person name="Goesmann A."/>
            <person name="Krause L."/>
            <person name="Bekel T."/>
            <person name="Kaiser O."/>
            <person name="Linke B."/>
            <person name="Patschkowski T."/>
            <person name="Rueckert C."/>
            <person name="Schmid J."/>
            <person name="Sidhu V.K."/>
            <person name="Sieber V."/>
            <person name="Tauch A."/>
            <person name="Watt S.A."/>
            <person name="Weisshaar B."/>
            <person name="Becker A."/>
            <person name="Niehaus K."/>
            <person name="Puehler A."/>
        </authorList>
    </citation>
    <scope>NUCLEOTIDE SEQUENCE [LARGE SCALE GENOMIC DNA]</scope>
    <source>
        <strain>B100</strain>
    </source>
</reference>
<name>SYM_XANCB</name>
<organism>
    <name type="scientific">Xanthomonas campestris pv. campestris (strain B100)</name>
    <dbReference type="NCBI Taxonomy" id="509169"/>
    <lineage>
        <taxon>Bacteria</taxon>
        <taxon>Pseudomonadati</taxon>
        <taxon>Pseudomonadota</taxon>
        <taxon>Gammaproteobacteria</taxon>
        <taxon>Lysobacterales</taxon>
        <taxon>Lysobacteraceae</taxon>
        <taxon>Xanthomonas</taxon>
    </lineage>
</organism>
<accession>B0RWA1</accession>
<sequence>MTRTALVTTALPYANGPLHLGHLVGYIQADIWVRARRLRGDKTWFVCADDTHGTPIMLAAEKAGVTPEAFIANIQASHERDFAAFGVTFDHYDSTNSPVNRELTEAFYTKLEAAGHISRRSVAQFYDPAKGMFLPDRYIKGICPNCGSADQYGDNCEVCGATYAPTELKEPKSVISGATPELRDSEHFFFEVGHFDGFLREWLDGDVALPGVKAKLKEWLDAEGGLRAWDISRDAPYFGFQIPGQPGKYFYVWLDAPIGYLCSFKTLCAQMGEDFQAHLAAGTQTELHHFIGKDIVNFHGLFWPAVLHGTGHRAPTRLHVNGYLMVDGAKMSKSRGTFVMARTFLDVGLEPEALRYYFAAKSSGGVDDLDLNLGDFVARVNADLVGKFVNLASRCAGFIGKRFDGKLADALPDPAQYARFVEALAPIREAYERNDPASAIRQTMALADEANKYIDDTKPWVIAKQEGADAQLQSVCTQGLNLFRLLVAALKPILPRTAAEAEAFLSAPMTSWEDVSRPLTCHVIQPYTALFTRIDPKLIDAMTDASKDTMAAPAAPAATTKPAPSKADAAPAAVANPQSPTANPGFIGMDDFAKLDLRIGKVLVCEAVEGSDKLLRFELDAGELGKRQIFSGIRASYGEPETLVGRSVVFIANLAPRKMRFGISEGMILSAGFDGGTLALLDADAGAQPGMPVR</sequence>
<dbReference type="EC" id="6.1.1.10" evidence="1"/>
<dbReference type="EMBL" id="AM920689">
    <property type="protein sequence ID" value="CAP52319.1"/>
    <property type="molecule type" value="Genomic_DNA"/>
</dbReference>
<dbReference type="SMR" id="B0RWA1"/>
<dbReference type="KEGG" id="xca:xcc-b100_2958"/>
<dbReference type="HOGENOM" id="CLU_009710_7_0_6"/>
<dbReference type="Proteomes" id="UP000001188">
    <property type="component" value="Chromosome"/>
</dbReference>
<dbReference type="GO" id="GO:0005829">
    <property type="term" value="C:cytosol"/>
    <property type="evidence" value="ECO:0007669"/>
    <property type="project" value="TreeGrafter"/>
</dbReference>
<dbReference type="GO" id="GO:0005524">
    <property type="term" value="F:ATP binding"/>
    <property type="evidence" value="ECO:0007669"/>
    <property type="project" value="UniProtKB-UniRule"/>
</dbReference>
<dbReference type="GO" id="GO:0046872">
    <property type="term" value="F:metal ion binding"/>
    <property type="evidence" value="ECO:0007669"/>
    <property type="project" value="UniProtKB-KW"/>
</dbReference>
<dbReference type="GO" id="GO:0004825">
    <property type="term" value="F:methionine-tRNA ligase activity"/>
    <property type="evidence" value="ECO:0007669"/>
    <property type="project" value="UniProtKB-UniRule"/>
</dbReference>
<dbReference type="GO" id="GO:0000049">
    <property type="term" value="F:tRNA binding"/>
    <property type="evidence" value="ECO:0007669"/>
    <property type="project" value="UniProtKB-KW"/>
</dbReference>
<dbReference type="GO" id="GO:0006431">
    <property type="term" value="P:methionyl-tRNA aminoacylation"/>
    <property type="evidence" value="ECO:0007669"/>
    <property type="project" value="UniProtKB-UniRule"/>
</dbReference>
<dbReference type="CDD" id="cd07957">
    <property type="entry name" value="Anticodon_Ia_Met"/>
    <property type="match status" value="1"/>
</dbReference>
<dbReference type="CDD" id="cd00814">
    <property type="entry name" value="MetRS_core"/>
    <property type="match status" value="1"/>
</dbReference>
<dbReference type="CDD" id="cd02800">
    <property type="entry name" value="tRNA_bind_EcMetRS_like"/>
    <property type="match status" value="1"/>
</dbReference>
<dbReference type="FunFam" id="1.10.730.10:FF:000005">
    <property type="entry name" value="Methionine--tRNA ligase"/>
    <property type="match status" value="1"/>
</dbReference>
<dbReference type="FunFam" id="2.20.28.20:FF:000001">
    <property type="entry name" value="Methionine--tRNA ligase"/>
    <property type="match status" value="1"/>
</dbReference>
<dbReference type="FunFam" id="2.40.50.140:FF:000042">
    <property type="entry name" value="Methionine--tRNA ligase"/>
    <property type="match status" value="1"/>
</dbReference>
<dbReference type="Gene3D" id="3.40.50.620">
    <property type="entry name" value="HUPs"/>
    <property type="match status" value="1"/>
</dbReference>
<dbReference type="Gene3D" id="1.10.730.10">
    <property type="entry name" value="Isoleucyl-tRNA Synthetase, Domain 1"/>
    <property type="match status" value="1"/>
</dbReference>
<dbReference type="Gene3D" id="2.20.28.20">
    <property type="entry name" value="Methionyl-tRNA synthetase, Zn-domain"/>
    <property type="match status" value="1"/>
</dbReference>
<dbReference type="Gene3D" id="2.40.50.140">
    <property type="entry name" value="Nucleic acid-binding proteins"/>
    <property type="match status" value="1"/>
</dbReference>
<dbReference type="HAMAP" id="MF_00098">
    <property type="entry name" value="Met_tRNA_synth_type1"/>
    <property type="match status" value="1"/>
</dbReference>
<dbReference type="InterPro" id="IPR001412">
    <property type="entry name" value="aa-tRNA-synth_I_CS"/>
</dbReference>
<dbReference type="InterPro" id="IPR041872">
    <property type="entry name" value="Anticodon_Met"/>
</dbReference>
<dbReference type="InterPro" id="IPR004495">
    <property type="entry name" value="Met-tRNA-synth_bsu_C"/>
</dbReference>
<dbReference type="InterPro" id="IPR023458">
    <property type="entry name" value="Met-tRNA_ligase_1"/>
</dbReference>
<dbReference type="InterPro" id="IPR014758">
    <property type="entry name" value="Met-tRNA_synth"/>
</dbReference>
<dbReference type="InterPro" id="IPR015413">
    <property type="entry name" value="Methionyl/Leucyl_tRNA_Synth"/>
</dbReference>
<dbReference type="InterPro" id="IPR033911">
    <property type="entry name" value="MetRS_core"/>
</dbReference>
<dbReference type="InterPro" id="IPR029038">
    <property type="entry name" value="MetRS_Zn"/>
</dbReference>
<dbReference type="InterPro" id="IPR012340">
    <property type="entry name" value="NA-bd_OB-fold"/>
</dbReference>
<dbReference type="InterPro" id="IPR014729">
    <property type="entry name" value="Rossmann-like_a/b/a_fold"/>
</dbReference>
<dbReference type="InterPro" id="IPR002547">
    <property type="entry name" value="tRNA-bd_dom"/>
</dbReference>
<dbReference type="InterPro" id="IPR009080">
    <property type="entry name" value="tRNAsynth_Ia_anticodon-bd"/>
</dbReference>
<dbReference type="NCBIfam" id="TIGR00398">
    <property type="entry name" value="metG"/>
    <property type="match status" value="1"/>
</dbReference>
<dbReference type="NCBIfam" id="TIGR00399">
    <property type="entry name" value="metG_C_term"/>
    <property type="match status" value="1"/>
</dbReference>
<dbReference type="NCBIfam" id="NF001100">
    <property type="entry name" value="PRK00133.1"/>
    <property type="match status" value="1"/>
</dbReference>
<dbReference type="PANTHER" id="PTHR45765">
    <property type="entry name" value="METHIONINE--TRNA LIGASE"/>
    <property type="match status" value="1"/>
</dbReference>
<dbReference type="PANTHER" id="PTHR45765:SF1">
    <property type="entry name" value="METHIONINE--TRNA LIGASE, CYTOPLASMIC"/>
    <property type="match status" value="1"/>
</dbReference>
<dbReference type="Pfam" id="PF19303">
    <property type="entry name" value="Anticodon_3"/>
    <property type="match status" value="1"/>
</dbReference>
<dbReference type="Pfam" id="PF09334">
    <property type="entry name" value="tRNA-synt_1g"/>
    <property type="match status" value="1"/>
</dbReference>
<dbReference type="Pfam" id="PF01588">
    <property type="entry name" value="tRNA_bind"/>
    <property type="match status" value="1"/>
</dbReference>
<dbReference type="PRINTS" id="PR01041">
    <property type="entry name" value="TRNASYNTHMET"/>
</dbReference>
<dbReference type="SUPFAM" id="SSF47323">
    <property type="entry name" value="Anticodon-binding domain of a subclass of class I aminoacyl-tRNA synthetases"/>
    <property type="match status" value="1"/>
</dbReference>
<dbReference type="SUPFAM" id="SSF57770">
    <property type="entry name" value="Methionyl-tRNA synthetase (MetRS), Zn-domain"/>
    <property type="match status" value="1"/>
</dbReference>
<dbReference type="SUPFAM" id="SSF50249">
    <property type="entry name" value="Nucleic acid-binding proteins"/>
    <property type="match status" value="1"/>
</dbReference>
<dbReference type="SUPFAM" id="SSF52374">
    <property type="entry name" value="Nucleotidylyl transferase"/>
    <property type="match status" value="1"/>
</dbReference>
<dbReference type="PROSITE" id="PS00178">
    <property type="entry name" value="AA_TRNA_LIGASE_I"/>
    <property type="match status" value="1"/>
</dbReference>
<dbReference type="PROSITE" id="PS50886">
    <property type="entry name" value="TRBD"/>
    <property type="match status" value="1"/>
</dbReference>
<evidence type="ECO:0000255" key="1">
    <source>
        <dbReference type="HAMAP-Rule" id="MF_00098"/>
    </source>
</evidence>
<evidence type="ECO:0000256" key="2">
    <source>
        <dbReference type="SAM" id="MobiDB-lite"/>
    </source>
</evidence>
<gene>
    <name evidence="1" type="primary">metG</name>
    <name type="ordered locus">xcc-b100_2958</name>
</gene>
<comment type="function">
    <text evidence="1">Is required not only for elongation of protein synthesis but also for the initiation of all mRNA translation through initiator tRNA(fMet) aminoacylation.</text>
</comment>
<comment type="catalytic activity">
    <reaction evidence="1">
        <text>tRNA(Met) + L-methionine + ATP = L-methionyl-tRNA(Met) + AMP + diphosphate</text>
        <dbReference type="Rhea" id="RHEA:13481"/>
        <dbReference type="Rhea" id="RHEA-COMP:9667"/>
        <dbReference type="Rhea" id="RHEA-COMP:9698"/>
        <dbReference type="ChEBI" id="CHEBI:30616"/>
        <dbReference type="ChEBI" id="CHEBI:33019"/>
        <dbReference type="ChEBI" id="CHEBI:57844"/>
        <dbReference type="ChEBI" id="CHEBI:78442"/>
        <dbReference type="ChEBI" id="CHEBI:78530"/>
        <dbReference type="ChEBI" id="CHEBI:456215"/>
        <dbReference type="EC" id="6.1.1.10"/>
    </reaction>
</comment>
<comment type="cofactor">
    <cofactor evidence="1">
        <name>Zn(2+)</name>
        <dbReference type="ChEBI" id="CHEBI:29105"/>
    </cofactor>
    <text evidence="1">Binds 1 zinc ion per subunit.</text>
</comment>
<comment type="subunit">
    <text evidence="1">Homodimer.</text>
</comment>
<comment type="subcellular location">
    <subcellularLocation>
        <location evidence="1">Cytoplasm</location>
    </subcellularLocation>
</comment>
<comment type="similarity">
    <text evidence="1">Belongs to the class-I aminoacyl-tRNA synthetase family. MetG type 1 subfamily.</text>
</comment>
<feature type="chain" id="PRO_1000093741" description="Methionine--tRNA ligase">
    <location>
        <begin position="1"/>
        <end position="694"/>
    </location>
</feature>
<feature type="domain" description="tRNA-binding" evidence="1">
    <location>
        <begin position="591"/>
        <end position="694"/>
    </location>
</feature>
<feature type="region of interest" description="Disordered" evidence="2">
    <location>
        <begin position="552"/>
        <end position="577"/>
    </location>
</feature>
<feature type="short sequence motif" description="'HIGH' region">
    <location>
        <begin position="12"/>
        <end position="22"/>
    </location>
</feature>
<feature type="short sequence motif" description="'KMSKS' region">
    <location>
        <begin position="330"/>
        <end position="334"/>
    </location>
</feature>
<feature type="binding site" evidence="1">
    <location>
        <position position="143"/>
    </location>
    <ligand>
        <name>Zn(2+)</name>
        <dbReference type="ChEBI" id="CHEBI:29105"/>
    </ligand>
</feature>
<feature type="binding site" evidence="1">
    <location>
        <position position="146"/>
    </location>
    <ligand>
        <name>Zn(2+)</name>
        <dbReference type="ChEBI" id="CHEBI:29105"/>
    </ligand>
</feature>
<feature type="binding site" evidence="1">
    <location>
        <position position="156"/>
    </location>
    <ligand>
        <name>Zn(2+)</name>
        <dbReference type="ChEBI" id="CHEBI:29105"/>
    </ligand>
</feature>
<feature type="binding site" evidence="1">
    <location>
        <position position="159"/>
    </location>
    <ligand>
        <name>Zn(2+)</name>
        <dbReference type="ChEBI" id="CHEBI:29105"/>
    </ligand>
</feature>
<feature type="binding site" evidence="1">
    <location>
        <position position="333"/>
    </location>
    <ligand>
        <name>ATP</name>
        <dbReference type="ChEBI" id="CHEBI:30616"/>
    </ligand>
</feature>
<keyword id="KW-0030">Aminoacyl-tRNA synthetase</keyword>
<keyword id="KW-0067">ATP-binding</keyword>
<keyword id="KW-0963">Cytoplasm</keyword>
<keyword id="KW-0436">Ligase</keyword>
<keyword id="KW-0479">Metal-binding</keyword>
<keyword id="KW-0547">Nucleotide-binding</keyword>
<keyword id="KW-0648">Protein biosynthesis</keyword>
<keyword id="KW-0694">RNA-binding</keyword>
<keyword id="KW-0820">tRNA-binding</keyword>
<keyword id="KW-0862">Zinc</keyword>
<protein>
    <recommendedName>
        <fullName evidence="1">Methionine--tRNA ligase</fullName>
        <ecNumber evidence="1">6.1.1.10</ecNumber>
    </recommendedName>
    <alternativeName>
        <fullName evidence="1">Methionyl-tRNA synthetase</fullName>
        <shortName evidence="1">MetRS</shortName>
    </alternativeName>
</protein>
<proteinExistence type="inferred from homology"/>